<organism>
    <name type="scientific">Streptococcus agalactiae serotype V (strain ATCC BAA-611 / 2603 V/R)</name>
    <dbReference type="NCBI Taxonomy" id="208435"/>
    <lineage>
        <taxon>Bacteria</taxon>
        <taxon>Bacillati</taxon>
        <taxon>Bacillota</taxon>
        <taxon>Bacilli</taxon>
        <taxon>Lactobacillales</taxon>
        <taxon>Streptococcaceae</taxon>
        <taxon>Streptococcus</taxon>
    </lineage>
</organism>
<accession>P67486</accession>
<accession>Q8DWV4</accession>
<accession>Q8E2Q6</accession>
<dbReference type="EC" id="6.1.1.21" evidence="2"/>
<dbReference type="EMBL" id="AE009948">
    <property type="protein sequence ID" value="AAN00966.1"/>
    <property type="molecule type" value="Genomic_DNA"/>
</dbReference>
<dbReference type="RefSeq" id="NP_689093.1">
    <property type="nucleotide sequence ID" value="NC_004116.1"/>
</dbReference>
<dbReference type="RefSeq" id="WP_000775901.1">
    <property type="nucleotide sequence ID" value="NC_004116.1"/>
</dbReference>
<dbReference type="SMR" id="P67486"/>
<dbReference type="STRING" id="208435.SAG2108"/>
<dbReference type="KEGG" id="sag:SAG2108"/>
<dbReference type="PATRIC" id="fig|208435.3.peg.2111"/>
<dbReference type="HOGENOM" id="CLU_025113_1_1_9"/>
<dbReference type="OrthoDB" id="9800814at2"/>
<dbReference type="Proteomes" id="UP000000821">
    <property type="component" value="Chromosome"/>
</dbReference>
<dbReference type="GO" id="GO:0005737">
    <property type="term" value="C:cytoplasm"/>
    <property type="evidence" value="ECO:0007669"/>
    <property type="project" value="UniProtKB-SubCell"/>
</dbReference>
<dbReference type="GO" id="GO:0005524">
    <property type="term" value="F:ATP binding"/>
    <property type="evidence" value="ECO:0007669"/>
    <property type="project" value="UniProtKB-UniRule"/>
</dbReference>
<dbReference type="GO" id="GO:0140096">
    <property type="term" value="F:catalytic activity, acting on a protein"/>
    <property type="evidence" value="ECO:0007669"/>
    <property type="project" value="UniProtKB-ARBA"/>
</dbReference>
<dbReference type="GO" id="GO:0004821">
    <property type="term" value="F:histidine-tRNA ligase activity"/>
    <property type="evidence" value="ECO:0007669"/>
    <property type="project" value="UniProtKB-UniRule"/>
</dbReference>
<dbReference type="GO" id="GO:0016740">
    <property type="term" value="F:transferase activity"/>
    <property type="evidence" value="ECO:0007669"/>
    <property type="project" value="UniProtKB-ARBA"/>
</dbReference>
<dbReference type="GO" id="GO:0006427">
    <property type="term" value="P:histidyl-tRNA aminoacylation"/>
    <property type="evidence" value="ECO:0007669"/>
    <property type="project" value="UniProtKB-UniRule"/>
</dbReference>
<dbReference type="CDD" id="cd00773">
    <property type="entry name" value="HisRS-like_core"/>
    <property type="match status" value="1"/>
</dbReference>
<dbReference type="CDD" id="cd00859">
    <property type="entry name" value="HisRS_anticodon"/>
    <property type="match status" value="1"/>
</dbReference>
<dbReference type="FunFam" id="3.30.930.10:FF:000005">
    <property type="entry name" value="Histidine--tRNA ligase"/>
    <property type="match status" value="1"/>
</dbReference>
<dbReference type="Gene3D" id="3.40.50.800">
    <property type="entry name" value="Anticodon-binding domain"/>
    <property type="match status" value="1"/>
</dbReference>
<dbReference type="Gene3D" id="3.30.930.10">
    <property type="entry name" value="Bira Bifunctional Protein, Domain 2"/>
    <property type="match status" value="1"/>
</dbReference>
<dbReference type="HAMAP" id="MF_00127">
    <property type="entry name" value="His_tRNA_synth"/>
    <property type="match status" value="1"/>
</dbReference>
<dbReference type="InterPro" id="IPR006195">
    <property type="entry name" value="aa-tRNA-synth_II"/>
</dbReference>
<dbReference type="InterPro" id="IPR045864">
    <property type="entry name" value="aa-tRNA-synth_II/BPL/LPL"/>
</dbReference>
<dbReference type="InterPro" id="IPR004154">
    <property type="entry name" value="Anticodon-bd"/>
</dbReference>
<dbReference type="InterPro" id="IPR036621">
    <property type="entry name" value="Anticodon-bd_dom_sf"/>
</dbReference>
<dbReference type="InterPro" id="IPR015807">
    <property type="entry name" value="His-tRNA-ligase"/>
</dbReference>
<dbReference type="InterPro" id="IPR041715">
    <property type="entry name" value="HisRS-like_core"/>
</dbReference>
<dbReference type="InterPro" id="IPR004516">
    <property type="entry name" value="HisRS/HisZ"/>
</dbReference>
<dbReference type="InterPro" id="IPR033656">
    <property type="entry name" value="HisRS_anticodon"/>
</dbReference>
<dbReference type="NCBIfam" id="TIGR00442">
    <property type="entry name" value="hisS"/>
    <property type="match status" value="1"/>
</dbReference>
<dbReference type="PANTHER" id="PTHR43707:SF1">
    <property type="entry name" value="HISTIDINE--TRNA LIGASE, MITOCHONDRIAL-RELATED"/>
    <property type="match status" value="1"/>
</dbReference>
<dbReference type="PANTHER" id="PTHR43707">
    <property type="entry name" value="HISTIDYL-TRNA SYNTHETASE"/>
    <property type="match status" value="1"/>
</dbReference>
<dbReference type="Pfam" id="PF03129">
    <property type="entry name" value="HGTP_anticodon"/>
    <property type="match status" value="1"/>
</dbReference>
<dbReference type="Pfam" id="PF13393">
    <property type="entry name" value="tRNA-synt_His"/>
    <property type="match status" value="1"/>
</dbReference>
<dbReference type="PIRSF" id="PIRSF001549">
    <property type="entry name" value="His-tRNA_synth"/>
    <property type="match status" value="1"/>
</dbReference>
<dbReference type="SUPFAM" id="SSF52954">
    <property type="entry name" value="Class II aaRS ABD-related"/>
    <property type="match status" value="1"/>
</dbReference>
<dbReference type="SUPFAM" id="SSF55681">
    <property type="entry name" value="Class II aaRS and biotin synthetases"/>
    <property type="match status" value="1"/>
</dbReference>
<dbReference type="PROSITE" id="PS50862">
    <property type="entry name" value="AA_TRNA_LIGASE_II"/>
    <property type="match status" value="1"/>
</dbReference>
<gene>
    <name evidence="2" type="primary">hisS</name>
    <name type="ordered locus">SAG2108</name>
</gene>
<feature type="initiator methionine" description="Removed" evidence="1">
    <location>
        <position position="1"/>
    </location>
</feature>
<feature type="chain" id="PRO_0000136261" description="Histidine--tRNA ligase">
    <location>
        <begin position="2"/>
        <end position="426"/>
    </location>
</feature>
<evidence type="ECO:0000250" key="1"/>
<evidence type="ECO:0000255" key="2">
    <source>
        <dbReference type="HAMAP-Rule" id="MF_00127"/>
    </source>
</evidence>
<proteinExistence type="inferred from homology"/>
<name>SYH_STRA5</name>
<sequence length="426" mass="48497">MKLQKPKGTQDILPGESAKWQYVENVIRNLFKQYHYDEIRTPMFEHYEVISRSVGDTTDIVTKEMYDFHDKGDRHITLRPEGTAPVVRSYVENKLFAPEVQKPTKMYYIGSMFRYERPQAGRLREFHQVGVECFGSNNPATDVETIAMGHHLFEDLGIKNVKLHLNSLGNPESRQAYRQALIDYLTPIREQLSKDSQRRLNENPLRVLDSKEPEDKLAVENAPSILDYLDESSQAHFDAVCHMLDALNIPYIIDTNMVRGLDYYNHTIFEFITEIEDNELTICAGGRYDGLVSYFGGPETPAFGFGLGLERLLLILDKQGISLPIENTIDLYIAVLGSEANLAALDLAQSIRHQGFKVERDYLGRKIKAQFKSADTFNAKVIMTLGSSEVDSKEVGLKNNQTRQEVKVSFENIKTDFSSVLKQLGL</sequence>
<reference key="1">
    <citation type="journal article" date="2002" name="Proc. Natl. Acad. Sci. U.S.A.">
        <title>Complete genome sequence and comparative genomic analysis of an emerging human pathogen, serotype V Streptococcus agalactiae.</title>
        <authorList>
            <person name="Tettelin H."/>
            <person name="Masignani V."/>
            <person name="Cieslewicz M.J."/>
            <person name="Eisen J.A."/>
            <person name="Peterson S.N."/>
            <person name="Wessels M.R."/>
            <person name="Paulsen I.T."/>
            <person name="Nelson K.E."/>
            <person name="Margarit I."/>
            <person name="Read T.D."/>
            <person name="Madoff L.C."/>
            <person name="Wolf A.M."/>
            <person name="Beanan M.J."/>
            <person name="Brinkac L.M."/>
            <person name="Daugherty S.C."/>
            <person name="DeBoy R.T."/>
            <person name="Durkin A.S."/>
            <person name="Kolonay J.F."/>
            <person name="Madupu R."/>
            <person name="Lewis M.R."/>
            <person name="Radune D."/>
            <person name="Fedorova N.B."/>
            <person name="Scanlan D."/>
            <person name="Khouri H.M."/>
            <person name="Mulligan S."/>
            <person name="Carty H.A."/>
            <person name="Cline R.T."/>
            <person name="Van Aken S.E."/>
            <person name="Gill J."/>
            <person name="Scarselli M."/>
            <person name="Mora M."/>
            <person name="Iacobini E.T."/>
            <person name="Brettoni C."/>
            <person name="Galli G."/>
            <person name="Mariani M."/>
            <person name="Vegni F."/>
            <person name="Maione D."/>
            <person name="Rinaudo D."/>
            <person name="Rappuoli R."/>
            <person name="Telford J.L."/>
            <person name="Kasper D.L."/>
            <person name="Grandi G."/>
            <person name="Fraser C.M."/>
        </authorList>
    </citation>
    <scope>NUCLEOTIDE SEQUENCE [LARGE SCALE GENOMIC DNA]</scope>
    <source>
        <strain>ATCC BAA-611 / 2603 V/R</strain>
    </source>
</reference>
<keyword id="KW-0030">Aminoacyl-tRNA synthetase</keyword>
<keyword id="KW-0067">ATP-binding</keyword>
<keyword id="KW-0963">Cytoplasm</keyword>
<keyword id="KW-0436">Ligase</keyword>
<keyword id="KW-0547">Nucleotide-binding</keyword>
<keyword id="KW-0648">Protein biosynthesis</keyword>
<keyword id="KW-1185">Reference proteome</keyword>
<protein>
    <recommendedName>
        <fullName evidence="2">Histidine--tRNA ligase</fullName>
        <ecNumber evidence="2">6.1.1.21</ecNumber>
    </recommendedName>
    <alternativeName>
        <fullName evidence="2">Histidyl-tRNA synthetase</fullName>
        <shortName evidence="2">HisRS</shortName>
    </alternativeName>
</protein>
<comment type="catalytic activity">
    <reaction evidence="2">
        <text>tRNA(His) + L-histidine + ATP = L-histidyl-tRNA(His) + AMP + diphosphate + H(+)</text>
        <dbReference type="Rhea" id="RHEA:17313"/>
        <dbReference type="Rhea" id="RHEA-COMP:9665"/>
        <dbReference type="Rhea" id="RHEA-COMP:9689"/>
        <dbReference type="ChEBI" id="CHEBI:15378"/>
        <dbReference type="ChEBI" id="CHEBI:30616"/>
        <dbReference type="ChEBI" id="CHEBI:33019"/>
        <dbReference type="ChEBI" id="CHEBI:57595"/>
        <dbReference type="ChEBI" id="CHEBI:78442"/>
        <dbReference type="ChEBI" id="CHEBI:78527"/>
        <dbReference type="ChEBI" id="CHEBI:456215"/>
        <dbReference type="EC" id="6.1.1.21"/>
    </reaction>
</comment>
<comment type="subunit">
    <text evidence="2">Homodimer.</text>
</comment>
<comment type="subcellular location">
    <subcellularLocation>
        <location evidence="2">Cytoplasm</location>
    </subcellularLocation>
</comment>
<comment type="similarity">
    <text evidence="2">Belongs to the class-II aminoacyl-tRNA synthetase family.</text>
</comment>